<protein>
    <recommendedName>
        <fullName>Protein CASP</fullName>
    </recommendedName>
</protein>
<comment type="function">
    <text evidence="1">May be involved in intra-Golgi retrograde transport.</text>
</comment>
<comment type="subcellular location">
    <subcellularLocation>
        <location evidence="1">Golgi apparatus membrane</location>
        <topology evidence="1">Single-pass type IV membrane protein</topology>
    </subcellularLocation>
</comment>
<comment type="alternative products">
    <event type="alternative splicing"/>
    <isoform>
        <id>Q8IA98-1</id>
        <name>b</name>
        <sequence type="displayed"/>
    </isoform>
    <isoform>
        <id>Q8IA98-2</id>
        <name>c</name>
        <sequence type="described" ref="VSP_017009"/>
    </isoform>
    <isoform>
        <id>Q9BL02-1</id>
        <name>a</name>
        <sequence type="external"/>
    </isoform>
</comment>
<comment type="similarity">
    <text evidence="3">Belongs to the CASP family.</text>
</comment>
<gene>
    <name type="primary">ceh-44</name>
    <name type="ORF">Y54F10AM.4</name>
</gene>
<sequence>MEIVSRAWESVDWDRIQTRVEAEVTALGQRQDDSEIRKTRLVEESNAYRGRTNKDSRKVAIPLIKAFQSEFDGLLARSTAAENALIDICKSIVSLPDPKSLLKGAEAWKNDAEKTQKAVEEREELKRQLIKVNNELEDLRGKDVKVRKLKDKLAKLESEQDIFIENAVNEVEKKAEQELNDRLTELIAEKEKMKEQNEILEKNMDSLESKNKDIQRKLEIAKQTVEQKDGLENEQLSIAMKDLADAKHKIVFLEERVSQLENEAEKVNESKKAGNIEDIAALGSVLVQKDDVIQQLTNDIKRHEASHVEELAKWKLAVSAVEKKNKTLIGELNELKNQLESRNDYEAIKNELRLLREIEFGDSAEANAESIERLGETVETLDRLLAEKNRRLQNENASLRVANDGFKGRNEEQEAELTVLKEKSERNDRLIAQLEADLASAVQDIGIPERMGTNEMLKDAPAPTISDASLVPILTSQRNRLHERVTSLEEAISLEKTKQLSVQNEIERVREENIRLCERIRFLQSPGGQQQANVEAGLGNDFRNGNRNKKVSLHDKTTLNMGRAILATPKSRTVFFSYLLILHALIMLVLYKFAFDQSVVRDAETECEYKFHQHMLDNHKQ</sequence>
<organism>
    <name type="scientific">Caenorhabditis elegans</name>
    <dbReference type="NCBI Taxonomy" id="6239"/>
    <lineage>
        <taxon>Eukaryota</taxon>
        <taxon>Metazoa</taxon>
        <taxon>Ecdysozoa</taxon>
        <taxon>Nematoda</taxon>
        <taxon>Chromadorea</taxon>
        <taxon>Rhabditida</taxon>
        <taxon>Rhabditina</taxon>
        <taxon>Rhabditomorpha</taxon>
        <taxon>Rhabditoidea</taxon>
        <taxon>Rhabditidae</taxon>
        <taxon>Peloderinae</taxon>
        <taxon>Caenorhabditis</taxon>
    </lineage>
</organism>
<feature type="chain" id="PRO_0000071793" description="Protein CASP">
    <location>
        <begin position="1"/>
        <end position="621"/>
    </location>
</feature>
<feature type="topological domain" description="Cytoplasmic" evidence="2">
    <location>
        <begin position="1"/>
        <end position="574"/>
    </location>
</feature>
<feature type="transmembrane region" description="Helical; Anchor for type IV membrane protein" evidence="2">
    <location>
        <begin position="575"/>
        <end position="595"/>
    </location>
</feature>
<feature type="topological domain" description="Lumenal" evidence="2">
    <location>
        <begin position="596"/>
        <end position="621"/>
    </location>
</feature>
<feature type="coiled-coil region" evidence="2">
    <location>
        <begin position="101"/>
        <end position="445"/>
    </location>
</feature>
<feature type="coiled-coil region" evidence="2">
    <location>
        <begin position="473"/>
        <end position="525"/>
    </location>
</feature>
<feature type="splice variant" id="VSP_017009" description="In isoform c." evidence="3">
    <original>DFR</original>
    <variation>E</variation>
    <location>
        <begin position="541"/>
        <end position="543"/>
    </location>
</feature>
<dbReference type="EMBL" id="FO081806">
    <property type="protein sequence ID" value="CCD73823.1"/>
    <property type="molecule type" value="Genomic_DNA"/>
</dbReference>
<dbReference type="EMBL" id="FO081806">
    <property type="protein sequence ID" value="CCD73824.1"/>
    <property type="molecule type" value="Genomic_DNA"/>
</dbReference>
<dbReference type="RefSeq" id="NP_497575.2">
    <molecule id="Q8IA98-2"/>
    <property type="nucleotide sequence ID" value="NM_065174.5"/>
</dbReference>
<dbReference type="RefSeq" id="NP_497577.2">
    <molecule id="Q8IA98-1"/>
    <property type="nucleotide sequence ID" value="NM_065176.5"/>
</dbReference>
<dbReference type="SMR" id="Q8IA98"/>
<dbReference type="BioGRID" id="40620">
    <property type="interactions" value="4"/>
</dbReference>
<dbReference type="PeptideAtlas" id="Q8IA98"/>
<dbReference type="EnsemblMetazoa" id="Y54F10AM.4b.1">
    <molecule id="Q8IA98-2"/>
    <property type="protein sequence ID" value="Y54F10AM.4b.1"/>
    <property type="gene ID" value="WBGene00000464"/>
</dbReference>
<dbReference type="EnsemblMetazoa" id="Y54F10AM.4c.1">
    <molecule id="Q8IA98-1"/>
    <property type="protein sequence ID" value="Y54F10AM.4c.1"/>
    <property type="gene ID" value="WBGene00000464"/>
</dbReference>
<dbReference type="KEGG" id="cel:CELE_Y54F10AM.16"/>
<dbReference type="UCSC" id="Y54F10AM.4c">
    <molecule id="Q8IA98-1"/>
    <property type="organism name" value="c. elegans"/>
</dbReference>
<dbReference type="AGR" id="WB:WBGene00306126"/>
<dbReference type="CTD" id="175372"/>
<dbReference type="WormBase" id="Y54F10AM.4b">
    <molecule id="Q8IA98-2"/>
    <property type="protein sequence ID" value="CE32987"/>
    <property type="gene ID" value="WBGene00000464"/>
    <property type="gene designation" value="ceh-44"/>
</dbReference>
<dbReference type="WormBase" id="Y54F10AM.4c">
    <molecule id="Q8IA98-1"/>
    <property type="protein sequence ID" value="CE32988"/>
    <property type="gene ID" value="WBGene00000464"/>
    <property type="gene designation" value="ceh-44"/>
</dbReference>
<dbReference type="HOGENOM" id="CLU_441623_0_0_1"/>
<dbReference type="OMA" id="WQQEGFN"/>
<dbReference type="OrthoDB" id="10257567at2759"/>
<dbReference type="Proteomes" id="UP000001940">
    <property type="component" value="Chromosome III"/>
</dbReference>
<dbReference type="Bgee" id="WBGene00000464">
    <property type="expression patterns" value="Expressed in embryo and 4 other cell types or tissues"/>
</dbReference>
<dbReference type="ExpressionAtlas" id="Q8IA98">
    <property type="expression patterns" value="baseline and differential"/>
</dbReference>
<dbReference type="GO" id="GO:0000139">
    <property type="term" value="C:Golgi membrane"/>
    <property type="evidence" value="ECO:0007669"/>
    <property type="project" value="UniProtKB-SubCell"/>
</dbReference>
<dbReference type="GO" id="GO:0005634">
    <property type="term" value="C:nucleus"/>
    <property type="evidence" value="ECO:0000318"/>
    <property type="project" value="GO_Central"/>
</dbReference>
<dbReference type="GO" id="GO:0000981">
    <property type="term" value="F:DNA-binding transcription factor activity, RNA polymerase II-specific"/>
    <property type="evidence" value="ECO:0000318"/>
    <property type="project" value="GO_Central"/>
</dbReference>
<dbReference type="GO" id="GO:0000977">
    <property type="term" value="F:RNA polymerase II transcription regulatory region sequence-specific DNA binding"/>
    <property type="evidence" value="ECO:0000318"/>
    <property type="project" value="GO_Central"/>
</dbReference>
<dbReference type="GO" id="GO:0006891">
    <property type="term" value="P:intra-Golgi vesicle-mediated transport"/>
    <property type="evidence" value="ECO:0007669"/>
    <property type="project" value="InterPro"/>
</dbReference>
<dbReference type="GO" id="GO:0006357">
    <property type="term" value="P:regulation of transcription by RNA polymerase II"/>
    <property type="evidence" value="ECO:0000318"/>
    <property type="project" value="GO_Central"/>
</dbReference>
<dbReference type="InterPro" id="IPR012955">
    <property type="entry name" value="CASP_C"/>
</dbReference>
<dbReference type="PANTHER" id="PTHR14043">
    <property type="entry name" value="CCAAT DISPLACEMENT PROTEIN-RELATED"/>
    <property type="match status" value="1"/>
</dbReference>
<dbReference type="PANTHER" id="PTHR14043:SF2">
    <property type="entry name" value="HOMEOBOX PROTEIN CUT"/>
    <property type="match status" value="1"/>
</dbReference>
<dbReference type="Pfam" id="PF08172">
    <property type="entry name" value="CASP_C"/>
    <property type="match status" value="2"/>
</dbReference>
<dbReference type="Pfam" id="PF25398">
    <property type="entry name" value="CUX1_N"/>
    <property type="match status" value="1"/>
</dbReference>
<name>CASP_CAEEL</name>
<evidence type="ECO:0000250" key="1"/>
<evidence type="ECO:0000255" key="2"/>
<evidence type="ECO:0000305" key="3"/>
<keyword id="KW-0025">Alternative splicing</keyword>
<keyword id="KW-0175">Coiled coil</keyword>
<keyword id="KW-0333">Golgi apparatus</keyword>
<keyword id="KW-0472">Membrane</keyword>
<keyword id="KW-1185">Reference proteome</keyword>
<keyword id="KW-0812">Transmembrane</keyword>
<keyword id="KW-1133">Transmembrane helix</keyword>
<keyword id="KW-0813">Transport</keyword>
<reference key="1">
    <citation type="journal article" date="1998" name="Science">
        <title>Genome sequence of the nematode C. elegans: a platform for investigating biology.</title>
        <authorList>
            <consortium name="The C. elegans sequencing consortium"/>
        </authorList>
    </citation>
    <scope>NUCLEOTIDE SEQUENCE [LARGE SCALE GENOMIC DNA]</scope>
    <source>
        <strain>Bristol N2</strain>
    </source>
</reference>
<reference key="2">
    <citation type="journal article" date="2002" name="Int. J. Dev. Biol.">
        <title>Loss and gain of domains during evolution of cut superclass homeobox genes.</title>
        <authorList>
            <person name="Buerglin T.R."/>
            <person name="Cassata G."/>
        </authorList>
    </citation>
    <scope>IDENTIFICATION</scope>
    <scope>ALTERNATIVE SPLICING</scope>
</reference>
<reference key="3">
    <citation type="journal article" date="2002" name="Mol. Biol. Cell">
        <title>CASP, the alternatively spliced product of the gene encoding the CCAAT-displacement protein transcription factor, is a Golgi membrane protein related to giantin.</title>
        <authorList>
            <person name="Gillingham A.K."/>
            <person name="Pfeifer A.C."/>
            <person name="Munro S."/>
        </authorList>
    </citation>
    <scope>IDENTIFICATION</scope>
    <scope>ALTERNATIVE SPLICING</scope>
</reference>
<proteinExistence type="inferred from homology"/>
<accession>Q8IA98</accession>
<accession>Q9BL01</accession>